<protein>
    <recommendedName>
        <fullName evidence="1">Arginine--tRNA ligase</fullName>
        <ecNumber evidence="1">6.1.1.19</ecNumber>
    </recommendedName>
    <alternativeName>
        <fullName evidence="1">Arginyl-tRNA synthetase</fullName>
        <shortName evidence="1">ArgRS</shortName>
    </alternativeName>
</protein>
<organism>
    <name type="scientific">Sulfurimonas denitrificans (strain ATCC 33889 / DSM 1251)</name>
    <name type="common">Thiomicrospira denitrificans (strain ATCC 33889 / DSM 1251)</name>
    <dbReference type="NCBI Taxonomy" id="326298"/>
    <lineage>
        <taxon>Bacteria</taxon>
        <taxon>Pseudomonadati</taxon>
        <taxon>Campylobacterota</taxon>
        <taxon>Epsilonproteobacteria</taxon>
        <taxon>Campylobacterales</taxon>
        <taxon>Sulfurimonadaceae</taxon>
        <taxon>Sulfurimonas</taxon>
    </lineage>
</organism>
<name>SYR_SULDN</name>
<comment type="catalytic activity">
    <reaction evidence="1">
        <text>tRNA(Arg) + L-arginine + ATP = L-arginyl-tRNA(Arg) + AMP + diphosphate</text>
        <dbReference type="Rhea" id="RHEA:20301"/>
        <dbReference type="Rhea" id="RHEA-COMP:9658"/>
        <dbReference type="Rhea" id="RHEA-COMP:9673"/>
        <dbReference type="ChEBI" id="CHEBI:30616"/>
        <dbReference type="ChEBI" id="CHEBI:32682"/>
        <dbReference type="ChEBI" id="CHEBI:33019"/>
        <dbReference type="ChEBI" id="CHEBI:78442"/>
        <dbReference type="ChEBI" id="CHEBI:78513"/>
        <dbReference type="ChEBI" id="CHEBI:456215"/>
        <dbReference type="EC" id="6.1.1.19"/>
    </reaction>
</comment>
<comment type="subunit">
    <text evidence="1">Monomer.</text>
</comment>
<comment type="subcellular location">
    <subcellularLocation>
        <location evidence="1">Cytoplasm</location>
    </subcellularLocation>
</comment>
<comment type="similarity">
    <text evidence="1">Belongs to the class-I aminoacyl-tRNA synthetase family.</text>
</comment>
<dbReference type="EC" id="6.1.1.19" evidence="1"/>
<dbReference type="EMBL" id="CP000153">
    <property type="protein sequence ID" value="ABB45068.1"/>
    <property type="molecule type" value="Genomic_DNA"/>
</dbReference>
<dbReference type="SMR" id="Q30PL3"/>
<dbReference type="STRING" id="326298.Suden_1794"/>
<dbReference type="KEGG" id="tdn:Suden_1794"/>
<dbReference type="eggNOG" id="COG0018">
    <property type="taxonomic scope" value="Bacteria"/>
</dbReference>
<dbReference type="HOGENOM" id="CLU_006406_0_1_7"/>
<dbReference type="Proteomes" id="UP000002714">
    <property type="component" value="Chromosome"/>
</dbReference>
<dbReference type="GO" id="GO:0005737">
    <property type="term" value="C:cytoplasm"/>
    <property type="evidence" value="ECO:0007669"/>
    <property type="project" value="UniProtKB-SubCell"/>
</dbReference>
<dbReference type="GO" id="GO:0004814">
    <property type="term" value="F:arginine-tRNA ligase activity"/>
    <property type="evidence" value="ECO:0007669"/>
    <property type="project" value="UniProtKB-UniRule"/>
</dbReference>
<dbReference type="GO" id="GO:0005524">
    <property type="term" value="F:ATP binding"/>
    <property type="evidence" value="ECO:0007669"/>
    <property type="project" value="UniProtKB-UniRule"/>
</dbReference>
<dbReference type="GO" id="GO:0006420">
    <property type="term" value="P:arginyl-tRNA aminoacylation"/>
    <property type="evidence" value="ECO:0007669"/>
    <property type="project" value="UniProtKB-UniRule"/>
</dbReference>
<dbReference type="CDD" id="cd00671">
    <property type="entry name" value="ArgRS_core"/>
    <property type="match status" value="1"/>
</dbReference>
<dbReference type="FunFam" id="3.40.50.620:FF:000062">
    <property type="entry name" value="Arginine--tRNA ligase"/>
    <property type="match status" value="1"/>
</dbReference>
<dbReference type="Gene3D" id="3.30.1360.70">
    <property type="entry name" value="Arginyl tRNA synthetase N-terminal domain"/>
    <property type="match status" value="1"/>
</dbReference>
<dbReference type="Gene3D" id="3.40.50.620">
    <property type="entry name" value="HUPs"/>
    <property type="match status" value="1"/>
</dbReference>
<dbReference type="Gene3D" id="1.10.730.10">
    <property type="entry name" value="Isoleucyl-tRNA Synthetase, Domain 1"/>
    <property type="match status" value="1"/>
</dbReference>
<dbReference type="HAMAP" id="MF_00123">
    <property type="entry name" value="Arg_tRNA_synth"/>
    <property type="match status" value="1"/>
</dbReference>
<dbReference type="InterPro" id="IPR001412">
    <property type="entry name" value="aa-tRNA-synth_I_CS"/>
</dbReference>
<dbReference type="InterPro" id="IPR001278">
    <property type="entry name" value="Arg-tRNA-ligase"/>
</dbReference>
<dbReference type="InterPro" id="IPR005148">
    <property type="entry name" value="Arg-tRNA-synth_N"/>
</dbReference>
<dbReference type="InterPro" id="IPR036695">
    <property type="entry name" value="Arg-tRNA-synth_N_sf"/>
</dbReference>
<dbReference type="InterPro" id="IPR035684">
    <property type="entry name" value="ArgRS_core"/>
</dbReference>
<dbReference type="InterPro" id="IPR008909">
    <property type="entry name" value="DALR_anticod-bd"/>
</dbReference>
<dbReference type="InterPro" id="IPR014729">
    <property type="entry name" value="Rossmann-like_a/b/a_fold"/>
</dbReference>
<dbReference type="InterPro" id="IPR009080">
    <property type="entry name" value="tRNAsynth_Ia_anticodon-bd"/>
</dbReference>
<dbReference type="NCBIfam" id="TIGR00456">
    <property type="entry name" value="argS"/>
    <property type="match status" value="1"/>
</dbReference>
<dbReference type="PANTHER" id="PTHR11956:SF5">
    <property type="entry name" value="ARGININE--TRNA LIGASE, CYTOPLASMIC"/>
    <property type="match status" value="1"/>
</dbReference>
<dbReference type="PANTHER" id="PTHR11956">
    <property type="entry name" value="ARGINYL-TRNA SYNTHETASE"/>
    <property type="match status" value="1"/>
</dbReference>
<dbReference type="Pfam" id="PF03485">
    <property type="entry name" value="Arg_tRNA_synt_N"/>
    <property type="match status" value="1"/>
</dbReference>
<dbReference type="Pfam" id="PF05746">
    <property type="entry name" value="DALR_1"/>
    <property type="match status" value="1"/>
</dbReference>
<dbReference type="Pfam" id="PF00750">
    <property type="entry name" value="tRNA-synt_1d"/>
    <property type="match status" value="1"/>
</dbReference>
<dbReference type="PRINTS" id="PR01038">
    <property type="entry name" value="TRNASYNTHARG"/>
</dbReference>
<dbReference type="SMART" id="SM01016">
    <property type="entry name" value="Arg_tRNA_synt_N"/>
    <property type="match status" value="1"/>
</dbReference>
<dbReference type="SMART" id="SM00836">
    <property type="entry name" value="DALR_1"/>
    <property type="match status" value="1"/>
</dbReference>
<dbReference type="SUPFAM" id="SSF47323">
    <property type="entry name" value="Anticodon-binding domain of a subclass of class I aminoacyl-tRNA synthetases"/>
    <property type="match status" value="1"/>
</dbReference>
<dbReference type="SUPFAM" id="SSF55190">
    <property type="entry name" value="Arginyl-tRNA synthetase (ArgRS), N-terminal 'additional' domain"/>
    <property type="match status" value="1"/>
</dbReference>
<dbReference type="SUPFAM" id="SSF52374">
    <property type="entry name" value="Nucleotidylyl transferase"/>
    <property type="match status" value="1"/>
</dbReference>
<dbReference type="PROSITE" id="PS00178">
    <property type="entry name" value="AA_TRNA_LIGASE_I"/>
    <property type="match status" value="1"/>
</dbReference>
<accession>Q30PL3</accession>
<gene>
    <name evidence="1" type="primary">argS</name>
    <name type="ordered locus">Suden_1794</name>
</gene>
<feature type="chain" id="PRO_0000242115" description="Arginine--tRNA ligase">
    <location>
        <begin position="1"/>
        <end position="527"/>
    </location>
</feature>
<feature type="short sequence motif" description="'HIGH' region">
    <location>
        <begin position="108"/>
        <end position="118"/>
    </location>
</feature>
<sequence length="527" mass="59951">MSALLREKFGREVILEKPRDRSFGHFATPIAFALAKELKQSPMKIADEIASSFEDNNIFSRVESVKGYLNFRLSENFLSEYGSWALENPQTFAKQEKKEKILLEFVSANPTGPLHIGHARGAVYGDTLFRLARHLGYDITAEYYVNDAGNQIDLLGLSIQLYGRENILHESVKYPESYYRGEYLAPLAHEAIKKFGLEILSDESRQKELALWAKDGVMEIIKKDLANTNIFFDTFVYESTLYDDWDRVMAKMGDGIYKKDDKLFIASSLKGDDDDRVVVREDARPTYLAGDIVYHNQKFERGYDHYINIWGADHHGYIARVKASVEFLGYDSAKLEVLLSQMVSLLKDGEPYKMSKRAGNVILMSDIVEEIGSDALRFIFASKKSDTALEFDLAEFKKQDSSNPIFYIQYAHARIKTIIAKSDLSHDEIMSATLKNLDESADMLMFDALLLPEIVEDAFISRQVQKLPEYLKSLAASLHKFYYDCRIIGTADEAKLLKLLMLVGLSLKTGLALMGIEAKDYMSKEEE</sequence>
<reference key="1">
    <citation type="journal article" date="2008" name="Appl. Environ. Microbiol.">
        <title>Genome of the epsilonproteobacterial chemolithoautotroph Sulfurimonas denitrificans.</title>
        <authorList>
            <person name="Sievert S.M."/>
            <person name="Scott K.M."/>
            <person name="Klotz M.G."/>
            <person name="Chain P.S.G."/>
            <person name="Hauser L.J."/>
            <person name="Hemp J."/>
            <person name="Huegler M."/>
            <person name="Land M."/>
            <person name="Lapidus A."/>
            <person name="Larimer F.W."/>
            <person name="Lucas S."/>
            <person name="Malfatti S.A."/>
            <person name="Meyer F."/>
            <person name="Paulsen I.T."/>
            <person name="Ren Q."/>
            <person name="Simon J."/>
            <person name="Bailey K."/>
            <person name="Diaz E."/>
            <person name="Fitzpatrick K.A."/>
            <person name="Glover B."/>
            <person name="Gwatney N."/>
            <person name="Korajkic A."/>
            <person name="Long A."/>
            <person name="Mobberley J.M."/>
            <person name="Pantry S.N."/>
            <person name="Pazder G."/>
            <person name="Peterson S."/>
            <person name="Quintanilla J.D."/>
            <person name="Sprinkle R."/>
            <person name="Stephens J."/>
            <person name="Thomas P."/>
            <person name="Vaughn R."/>
            <person name="Weber M.J."/>
            <person name="Wooten L.L."/>
        </authorList>
    </citation>
    <scope>NUCLEOTIDE SEQUENCE [LARGE SCALE GENOMIC DNA]</scope>
    <source>
        <strain>ATCC 33889 / DSM 1251</strain>
    </source>
</reference>
<evidence type="ECO:0000255" key="1">
    <source>
        <dbReference type="HAMAP-Rule" id="MF_00123"/>
    </source>
</evidence>
<keyword id="KW-0030">Aminoacyl-tRNA synthetase</keyword>
<keyword id="KW-0067">ATP-binding</keyword>
<keyword id="KW-0963">Cytoplasm</keyword>
<keyword id="KW-0436">Ligase</keyword>
<keyword id="KW-0547">Nucleotide-binding</keyword>
<keyword id="KW-0648">Protein biosynthesis</keyword>
<keyword id="KW-1185">Reference proteome</keyword>
<proteinExistence type="inferred from homology"/>